<proteinExistence type="inferred from homology"/>
<name>RBSD_VIBC3</name>
<organism>
    <name type="scientific">Vibrio cholerae serotype O1 (strain ATCC 39541 / Classical Ogawa 395 / O395)</name>
    <dbReference type="NCBI Taxonomy" id="345073"/>
    <lineage>
        <taxon>Bacteria</taxon>
        <taxon>Pseudomonadati</taxon>
        <taxon>Pseudomonadota</taxon>
        <taxon>Gammaproteobacteria</taxon>
        <taxon>Vibrionales</taxon>
        <taxon>Vibrionaceae</taxon>
        <taxon>Vibrio</taxon>
    </lineage>
</organism>
<protein>
    <recommendedName>
        <fullName evidence="1">D-ribose pyranase</fullName>
        <ecNumber evidence="1">5.4.99.62</ecNumber>
    </recommendedName>
</protein>
<dbReference type="EC" id="5.4.99.62" evidence="1"/>
<dbReference type="EMBL" id="CP000626">
    <property type="protein sequence ID" value="ABQ19187.1"/>
    <property type="status" value="ALT_INIT"/>
    <property type="molecule type" value="Genomic_DNA"/>
</dbReference>
<dbReference type="EMBL" id="CP001236">
    <property type="protein sequence ID" value="ACP10964.1"/>
    <property type="status" value="ALT_INIT"/>
    <property type="molecule type" value="Genomic_DNA"/>
</dbReference>
<dbReference type="RefSeq" id="WP_001911632.1">
    <property type="nucleotide sequence ID" value="NZ_JAACZH010000004.1"/>
</dbReference>
<dbReference type="SMR" id="A5F1C1"/>
<dbReference type="KEGG" id="vco:VC0395_0011"/>
<dbReference type="KEGG" id="vcr:VC395_A0120"/>
<dbReference type="PATRIC" id="fig|345073.21.peg.2879"/>
<dbReference type="eggNOG" id="COG1869">
    <property type="taxonomic scope" value="Bacteria"/>
</dbReference>
<dbReference type="HOGENOM" id="CLU_135498_0_0_6"/>
<dbReference type="OrthoDB" id="9805009at2"/>
<dbReference type="UniPathway" id="UPA00916">
    <property type="reaction ID" value="UER00888"/>
</dbReference>
<dbReference type="Proteomes" id="UP000000249">
    <property type="component" value="Chromosome 1"/>
</dbReference>
<dbReference type="GO" id="GO:0005829">
    <property type="term" value="C:cytosol"/>
    <property type="evidence" value="ECO:0007669"/>
    <property type="project" value="TreeGrafter"/>
</dbReference>
<dbReference type="GO" id="GO:0062193">
    <property type="term" value="F:D-ribose pyranase activity"/>
    <property type="evidence" value="ECO:0007669"/>
    <property type="project" value="UniProtKB-EC"/>
</dbReference>
<dbReference type="GO" id="GO:0016872">
    <property type="term" value="F:intramolecular lyase activity"/>
    <property type="evidence" value="ECO:0007669"/>
    <property type="project" value="UniProtKB-UniRule"/>
</dbReference>
<dbReference type="GO" id="GO:0048029">
    <property type="term" value="F:monosaccharide binding"/>
    <property type="evidence" value="ECO:0007669"/>
    <property type="project" value="InterPro"/>
</dbReference>
<dbReference type="GO" id="GO:0019303">
    <property type="term" value="P:D-ribose catabolic process"/>
    <property type="evidence" value="ECO:0007669"/>
    <property type="project" value="UniProtKB-UniRule"/>
</dbReference>
<dbReference type="Gene3D" id="3.40.1650.10">
    <property type="entry name" value="RbsD-like domain"/>
    <property type="match status" value="1"/>
</dbReference>
<dbReference type="HAMAP" id="MF_01661">
    <property type="entry name" value="D_rib_pyranase"/>
    <property type="match status" value="1"/>
</dbReference>
<dbReference type="InterPro" id="IPR023064">
    <property type="entry name" value="D-ribose_pyranase"/>
</dbReference>
<dbReference type="InterPro" id="IPR023750">
    <property type="entry name" value="RbsD-like_sf"/>
</dbReference>
<dbReference type="InterPro" id="IPR007721">
    <property type="entry name" value="RbsD_FucU"/>
</dbReference>
<dbReference type="NCBIfam" id="NF008761">
    <property type="entry name" value="PRK11797.1"/>
    <property type="match status" value="1"/>
</dbReference>
<dbReference type="PANTHER" id="PTHR37831">
    <property type="entry name" value="D-RIBOSE PYRANASE"/>
    <property type="match status" value="1"/>
</dbReference>
<dbReference type="PANTHER" id="PTHR37831:SF1">
    <property type="entry name" value="D-RIBOSE PYRANASE"/>
    <property type="match status" value="1"/>
</dbReference>
<dbReference type="Pfam" id="PF05025">
    <property type="entry name" value="RbsD_FucU"/>
    <property type="match status" value="1"/>
</dbReference>
<dbReference type="SUPFAM" id="SSF102546">
    <property type="entry name" value="RbsD-like"/>
    <property type="match status" value="1"/>
</dbReference>
<keyword id="KW-0119">Carbohydrate metabolism</keyword>
<keyword id="KW-0963">Cytoplasm</keyword>
<keyword id="KW-0413">Isomerase</keyword>
<comment type="function">
    <text evidence="1">Catalyzes the interconversion of beta-pyran and beta-furan forms of D-ribose.</text>
</comment>
<comment type="catalytic activity">
    <reaction evidence="1">
        <text>beta-D-ribopyranose = beta-D-ribofuranose</text>
        <dbReference type="Rhea" id="RHEA:25432"/>
        <dbReference type="ChEBI" id="CHEBI:27476"/>
        <dbReference type="ChEBI" id="CHEBI:47002"/>
        <dbReference type="EC" id="5.4.99.62"/>
    </reaction>
</comment>
<comment type="pathway">
    <text evidence="1">Carbohydrate metabolism; D-ribose degradation; D-ribose 5-phosphate from beta-D-ribopyranose: step 1/2.</text>
</comment>
<comment type="subunit">
    <text evidence="1">Homodecamer.</text>
</comment>
<comment type="subcellular location">
    <subcellularLocation>
        <location evidence="1">Cytoplasm</location>
    </subcellularLocation>
</comment>
<comment type="similarity">
    <text evidence="1">Belongs to the RbsD / FucU family. RbsD subfamily.</text>
</comment>
<comment type="sequence caution" evidence="2">
    <conflict type="erroneous initiation">
        <sequence resource="EMBL-CDS" id="ABQ19187"/>
    </conflict>
</comment>
<comment type="sequence caution" evidence="2">
    <conflict type="erroneous initiation">
        <sequence resource="EMBL-CDS" id="ACP10964"/>
    </conflict>
</comment>
<accession>A5F1C1</accession>
<accession>C3M7G8</accession>
<evidence type="ECO:0000255" key="1">
    <source>
        <dbReference type="HAMAP-Rule" id="MF_01661"/>
    </source>
</evidence>
<evidence type="ECO:0000305" key="2"/>
<feature type="chain" id="PRO_0000346294" description="D-ribose pyranase">
    <location>
        <begin position="1"/>
        <end position="139"/>
    </location>
</feature>
<feature type="active site" description="Proton donor" evidence="1">
    <location>
        <position position="20"/>
    </location>
</feature>
<feature type="binding site" evidence="1">
    <location>
        <position position="28"/>
    </location>
    <ligand>
        <name>substrate</name>
    </ligand>
</feature>
<feature type="binding site" evidence="1">
    <location>
        <position position="106"/>
    </location>
    <ligand>
        <name>substrate</name>
    </ligand>
</feature>
<feature type="binding site" evidence="1">
    <location>
        <begin position="128"/>
        <end position="130"/>
    </location>
    <ligand>
        <name>substrate</name>
    </ligand>
</feature>
<gene>
    <name evidence="1" type="primary">rbsD</name>
    <name type="ordered locus">VC0395_0011</name>
    <name type="ordered locus">VC395_A0120</name>
</gene>
<sequence>MKKSTLLNSELSYLVATLGHTDEITICDAGLPIPDEVTRIDLALTHGVPSFLETVRVILSESQIESVIVAQEFAQVSPVLHEALYRELKAEEQLCGKPIAIQYISHEAFKQRTLQSRAVVRTGECTPYANVIFQAGVVF</sequence>
<reference key="1">
    <citation type="submission" date="2007-03" db="EMBL/GenBank/DDBJ databases">
        <authorList>
            <person name="Heidelberg J."/>
        </authorList>
    </citation>
    <scope>NUCLEOTIDE SEQUENCE [LARGE SCALE GENOMIC DNA]</scope>
    <source>
        <strain>ATCC 39541 / Classical Ogawa 395 / O395</strain>
    </source>
</reference>
<reference key="2">
    <citation type="journal article" date="2008" name="PLoS ONE">
        <title>A recalibrated molecular clock and independent origins for the cholera pandemic clones.</title>
        <authorList>
            <person name="Feng L."/>
            <person name="Reeves P.R."/>
            <person name="Lan R."/>
            <person name="Ren Y."/>
            <person name="Gao C."/>
            <person name="Zhou Z."/>
            <person name="Ren Y."/>
            <person name="Cheng J."/>
            <person name="Wang W."/>
            <person name="Wang J."/>
            <person name="Qian W."/>
            <person name="Li D."/>
            <person name="Wang L."/>
        </authorList>
    </citation>
    <scope>NUCLEOTIDE SEQUENCE [LARGE SCALE GENOMIC DNA]</scope>
    <source>
        <strain>ATCC 39541 / Classical Ogawa 395 / O395</strain>
    </source>
</reference>